<name>RNPH_CORGB</name>
<reference key="1">
    <citation type="journal article" date="2007" name="Microbiology">
        <title>Comparative analysis of the Corynebacterium glutamicum group and complete genome sequence of strain R.</title>
        <authorList>
            <person name="Yukawa H."/>
            <person name="Omumasaba C.A."/>
            <person name="Nonaka H."/>
            <person name="Kos P."/>
            <person name="Okai N."/>
            <person name="Suzuki N."/>
            <person name="Suda M."/>
            <person name="Tsuge Y."/>
            <person name="Watanabe J."/>
            <person name="Ikeda Y."/>
            <person name="Vertes A.A."/>
            <person name="Inui M."/>
        </authorList>
    </citation>
    <scope>NUCLEOTIDE SEQUENCE [LARGE SCALE GENOMIC DNA]</scope>
    <source>
        <strain>R</strain>
    </source>
</reference>
<proteinExistence type="inferred from homology"/>
<feature type="chain" id="PRO_1000024799" description="Ribonuclease PH">
    <location>
        <begin position="1"/>
        <end position="245"/>
    </location>
</feature>
<feature type="binding site" evidence="1">
    <location>
        <position position="93"/>
    </location>
    <ligand>
        <name>phosphate</name>
        <dbReference type="ChEBI" id="CHEBI:43474"/>
        <note>substrate</note>
    </ligand>
</feature>
<feature type="binding site" evidence="1">
    <location>
        <begin position="131"/>
        <end position="133"/>
    </location>
    <ligand>
        <name>phosphate</name>
        <dbReference type="ChEBI" id="CHEBI:43474"/>
        <note>substrate</note>
    </ligand>
</feature>
<evidence type="ECO:0000255" key="1">
    <source>
        <dbReference type="HAMAP-Rule" id="MF_00564"/>
    </source>
</evidence>
<dbReference type="EC" id="2.7.7.56" evidence="1"/>
<dbReference type="EMBL" id="AP009044">
    <property type="protein sequence ID" value="BAF55422.1"/>
    <property type="molecule type" value="Genomic_DNA"/>
</dbReference>
<dbReference type="RefSeq" id="WP_011897796.1">
    <property type="nucleotide sequence ID" value="NC_009342.1"/>
</dbReference>
<dbReference type="SMR" id="A4QGQ6"/>
<dbReference type="KEGG" id="cgt:cgR_2414"/>
<dbReference type="HOGENOM" id="CLU_050858_0_0_11"/>
<dbReference type="PhylomeDB" id="A4QGQ6"/>
<dbReference type="Proteomes" id="UP000006698">
    <property type="component" value="Chromosome"/>
</dbReference>
<dbReference type="GO" id="GO:0000175">
    <property type="term" value="F:3'-5'-RNA exonuclease activity"/>
    <property type="evidence" value="ECO:0007669"/>
    <property type="project" value="UniProtKB-UniRule"/>
</dbReference>
<dbReference type="GO" id="GO:0000049">
    <property type="term" value="F:tRNA binding"/>
    <property type="evidence" value="ECO:0007669"/>
    <property type="project" value="UniProtKB-UniRule"/>
</dbReference>
<dbReference type="GO" id="GO:0009022">
    <property type="term" value="F:tRNA nucleotidyltransferase activity"/>
    <property type="evidence" value="ECO:0007669"/>
    <property type="project" value="UniProtKB-UniRule"/>
</dbReference>
<dbReference type="GO" id="GO:0016075">
    <property type="term" value="P:rRNA catabolic process"/>
    <property type="evidence" value="ECO:0007669"/>
    <property type="project" value="UniProtKB-UniRule"/>
</dbReference>
<dbReference type="GO" id="GO:0006364">
    <property type="term" value="P:rRNA processing"/>
    <property type="evidence" value="ECO:0007669"/>
    <property type="project" value="UniProtKB-KW"/>
</dbReference>
<dbReference type="GO" id="GO:0008033">
    <property type="term" value="P:tRNA processing"/>
    <property type="evidence" value="ECO:0007669"/>
    <property type="project" value="UniProtKB-UniRule"/>
</dbReference>
<dbReference type="CDD" id="cd11362">
    <property type="entry name" value="RNase_PH_bact"/>
    <property type="match status" value="1"/>
</dbReference>
<dbReference type="FunFam" id="3.30.230.70:FF:000003">
    <property type="entry name" value="Ribonuclease PH"/>
    <property type="match status" value="1"/>
</dbReference>
<dbReference type="Gene3D" id="3.30.230.70">
    <property type="entry name" value="GHMP Kinase, N-terminal domain"/>
    <property type="match status" value="1"/>
</dbReference>
<dbReference type="HAMAP" id="MF_00564">
    <property type="entry name" value="RNase_PH"/>
    <property type="match status" value="1"/>
</dbReference>
<dbReference type="InterPro" id="IPR001247">
    <property type="entry name" value="ExoRNase_PH_dom1"/>
</dbReference>
<dbReference type="InterPro" id="IPR015847">
    <property type="entry name" value="ExoRNase_PH_dom2"/>
</dbReference>
<dbReference type="InterPro" id="IPR036345">
    <property type="entry name" value="ExoRNase_PH_dom2_sf"/>
</dbReference>
<dbReference type="InterPro" id="IPR027408">
    <property type="entry name" value="PNPase/RNase_PH_dom_sf"/>
</dbReference>
<dbReference type="InterPro" id="IPR020568">
    <property type="entry name" value="Ribosomal_Su5_D2-typ_SF"/>
</dbReference>
<dbReference type="InterPro" id="IPR050080">
    <property type="entry name" value="RNase_PH"/>
</dbReference>
<dbReference type="InterPro" id="IPR002381">
    <property type="entry name" value="RNase_PH_bac-type"/>
</dbReference>
<dbReference type="InterPro" id="IPR018336">
    <property type="entry name" value="RNase_PH_CS"/>
</dbReference>
<dbReference type="NCBIfam" id="TIGR01966">
    <property type="entry name" value="RNasePH"/>
    <property type="match status" value="1"/>
</dbReference>
<dbReference type="PANTHER" id="PTHR11953">
    <property type="entry name" value="EXOSOME COMPLEX COMPONENT"/>
    <property type="match status" value="1"/>
</dbReference>
<dbReference type="PANTHER" id="PTHR11953:SF0">
    <property type="entry name" value="EXOSOME COMPLEX COMPONENT RRP41"/>
    <property type="match status" value="1"/>
</dbReference>
<dbReference type="Pfam" id="PF01138">
    <property type="entry name" value="RNase_PH"/>
    <property type="match status" value="1"/>
</dbReference>
<dbReference type="Pfam" id="PF03725">
    <property type="entry name" value="RNase_PH_C"/>
    <property type="match status" value="1"/>
</dbReference>
<dbReference type="SUPFAM" id="SSF55666">
    <property type="entry name" value="Ribonuclease PH domain 2-like"/>
    <property type="match status" value="1"/>
</dbReference>
<dbReference type="SUPFAM" id="SSF54211">
    <property type="entry name" value="Ribosomal protein S5 domain 2-like"/>
    <property type="match status" value="1"/>
</dbReference>
<dbReference type="PROSITE" id="PS01277">
    <property type="entry name" value="RIBONUCLEASE_PH"/>
    <property type="match status" value="1"/>
</dbReference>
<comment type="function">
    <text evidence="1">Phosphorolytic 3'-5' exoribonuclease that plays an important role in tRNA 3'-end maturation. Removes nucleotide residues following the 3'-CCA terminus of tRNAs; can also add nucleotides to the ends of RNA molecules by using nucleoside diphosphates as substrates, but this may not be physiologically important. Probably plays a role in initiation of 16S rRNA degradation (leading to ribosome degradation) during starvation.</text>
</comment>
<comment type="catalytic activity">
    <reaction evidence="1">
        <text>tRNA(n+1) + phosphate = tRNA(n) + a ribonucleoside 5'-diphosphate</text>
        <dbReference type="Rhea" id="RHEA:10628"/>
        <dbReference type="Rhea" id="RHEA-COMP:17343"/>
        <dbReference type="Rhea" id="RHEA-COMP:17344"/>
        <dbReference type="ChEBI" id="CHEBI:43474"/>
        <dbReference type="ChEBI" id="CHEBI:57930"/>
        <dbReference type="ChEBI" id="CHEBI:173114"/>
        <dbReference type="EC" id="2.7.7.56"/>
    </reaction>
</comment>
<comment type="subunit">
    <text evidence="1">Homohexameric ring arranged as a trimer of dimers.</text>
</comment>
<comment type="similarity">
    <text evidence="1">Belongs to the RNase PH family.</text>
</comment>
<keyword id="KW-0548">Nucleotidyltransferase</keyword>
<keyword id="KW-0694">RNA-binding</keyword>
<keyword id="KW-0698">rRNA processing</keyword>
<keyword id="KW-0808">Transferase</keyword>
<keyword id="KW-0819">tRNA processing</keyword>
<keyword id="KW-0820">tRNA-binding</keyword>
<accession>A4QGQ6</accession>
<sequence>MTSSSSFSRFDGRAQDQMRAVKITRGFTSNPAGSVLVEFGNTRVMCTASVELGVPRFKRDSGEGWLTAEYAMLPAATAERNRRESMAGKVKGRTHEISRLIGRSLRAAVDLSQLGENTIAIDCDVLQADGGTRTASITGAYVALADAIKVLQERGVVPGSPLLAPVAAVSVGLVDGNVCLDLPYEEDSRADVDLNVVMTEHGEFVEIQGTGEETTFTRAQLNDMLDYAEKGCRELVAAQKAALGI</sequence>
<organism>
    <name type="scientific">Corynebacterium glutamicum (strain R)</name>
    <dbReference type="NCBI Taxonomy" id="340322"/>
    <lineage>
        <taxon>Bacteria</taxon>
        <taxon>Bacillati</taxon>
        <taxon>Actinomycetota</taxon>
        <taxon>Actinomycetes</taxon>
        <taxon>Mycobacteriales</taxon>
        <taxon>Corynebacteriaceae</taxon>
        <taxon>Corynebacterium</taxon>
    </lineage>
</organism>
<gene>
    <name evidence="1" type="primary">rph</name>
    <name type="ordered locus">cgR_2414</name>
</gene>
<protein>
    <recommendedName>
        <fullName evidence="1">Ribonuclease PH</fullName>
        <shortName evidence="1">RNase PH</shortName>
        <ecNumber evidence="1">2.7.7.56</ecNumber>
    </recommendedName>
    <alternativeName>
        <fullName evidence="1">tRNA nucleotidyltransferase</fullName>
    </alternativeName>
</protein>